<feature type="chain" id="PRO_0000170099" description="LexA repressor">
    <location>
        <begin position="1"/>
        <end position="197"/>
    </location>
</feature>
<feature type="DNA-binding region" description="H-T-H motif" evidence="1">
    <location>
        <begin position="28"/>
        <end position="47"/>
    </location>
</feature>
<feature type="active site" description="For autocatalytic cleavage activity" evidence="1">
    <location>
        <position position="119"/>
    </location>
</feature>
<feature type="active site" description="For autocatalytic cleavage activity" evidence="1">
    <location>
        <position position="156"/>
    </location>
</feature>
<feature type="site" description="Cleavage; by autolysis" evidence="1">
    <location>
        <begin position="83"/>
        <end position="84"/>
    </location>
</feature>
<comment type="function">
    <text evidence="1">Represses a number of genes involved in the response to DNA damage (SOS response), including recA and lexA. In the presence of single-stranded DNA, RecA interacts with LexA causing an autocatalytic cleavage which disrupts the DNA-binding part of LexA, leading to derepression of the SOS regulon and eventually DNA repair.</text>
</comment>
<comment type="catalytic activity">
    <reaction evidence="1">
        <text>Hydrolysis of Ala-|-Gly bond in repressor LexA.</text>
        <dbReference type="EC" id="3.4.21.88"/>
    </reaction>
</comment>
<comment type="subunit">
    <text evidence="1">Homodimer.</text>
</comment>
<comment type="miscellaneous">
    <text>No consensus sequence similar to the SOS-box from E.coli or from B.subtilis was found upstream of the lexA gene, suggesting the presence of another target sequence specific for the Thermotogales.</text>
</comment>
<comment type="similarity">
    <text evidence="1">Belongs to the peptidase S24 family.</text>
</comment>
<reference key="1">
    <citation type="journal article" date="1999" name="Syst. Appl. Microbiol.">
        <title>Organization of the chromosomal region containing the genes lexA and topA in Thermotoga neapolitana. Primary structure of LexA reveals phylogenetic relevance.</title>
        <authorList>
            <person name="Zverlov V.V."/>
            <person name="Schwarz W.H."/>
        </authorList>
    </citation>
    <scope>NUCLEOTIDE SEQUENCE [GENOMIC DNA]</scope>
    <source>
        <strain>Z2706-MC24</strain>
    </source>
</reference>
<name>LEXA_THENE</name>
<sequence length="197" mass="22708">MKDLTAKQRSVLIFIEEFIEKNGYPPSVREIARRFRITPRGAQLHLVALEKKGYIERKNGKPRAMRVTKSVKNRVPLIGEIRAGEKKEAIEYLEDYIEVPGSFLSSGYEHFLLRVKGESMIEEHICDGDLVLIRRQDWAQNGDIVAAMVEGEVTLKKFFQRGEMVELRPANKEMSPMFFRADRVKILGKVVGVFRKI</sequence>
<gene>
    <name evidence="1" type="primary">lexA</name>
</gene>
<proteinExistence type="inferred from homology"/>
<protein>
    <recommendedName>
        <fullName evidence="1">LexA repressor</fullName>
        <ecNumber evidence="1">3.4.21.88</ecNumber>
    </recommendedName>
</protein>
<dbReference type="EC" id="3.4.21.88" evidence="1"/>
<dbReference type="EMBL" id="AJ007446">
    <property type="protein sequence ID" value="CAA07513.1"/>
    <property type="molecule type" value="Genomic_DNA"/>
</dbReference>
<dbReference type="SMR" id="O86948"/>
<dbReference type="MEROPS" id="S24.001"/>
<dbReference type="GO" id="GO:0003677">
    <property type="term" value="F:DNA binding"/>
    <property type="evidence" value="ECO:0007669"/>
    <property type="project" value="UniProtKB-UniRule"/>
</dbReference>
<dbReference type="GO" id="GO:0004252">
    <property type="term" value="F:serine-type endopeptidase activity"/>
    <property type="evidence" value="ECO:0007669"/>
    <property type="project" value="UniProtKB-UniRule"/>
</dbReference>
<dbReference type="GO" id="GO:0006281">
    <property type="term" value="P:DNA repair"/>
    <property type="evidence" value="ECO:0007669"/>
    <property type="project" value="UniProtKB-UniRule"/>
</dbReference>
<dbReference type="GO" id="GO:0006260">
    <property type="term" value="P:DNA replication"/>
    <property type="evidence" value="ECO:0007669"/>
    <property type="project" value="UniProtKB-UniRule"/>
</dbReference>
<dbReference type="GO" id="GO:0045892">
    <property type="term" value="P:negative regulation of DNA-templated transcription"/>
    <property type="evidence" value="ECO:0007669"/>
    <property type="project" value="UniProtKB-UniRule"/>
</dbReference>
<dbReference type="GO" id="GO:0006508">
    <property type="term" value="P:proteolysis"/>
    <property type="evidence" value="ECO:0007669"/>
    <property type="project" value="InterPro"/>
</dbReference>
<dbReference type="GO" id="GO:0009432">
    <property type="term" value="P:SOS response"/>
    <property type="evidence" value="ECO:0007669"/>
    <property type="project" value="UniProtKB-UniRule"/>
</dbReference>
<dbReference type="CDD" id="cd06529">
    <property type="entry name" value="S24_LexA-like"/>
    <property type="match status" value="1"/>
</dbReference>
<dbReference type="FunFam" id="1.10.10.10:FF:000009">
    <property type="entry name" value="LexA repressor"/>
    <property type="match status" value="1"/>
</dbReference>
<dbReference type="FunFam" id="2.10.109.10:FF:000001">
    <property type="entry name" value="LexA repressor"/>
    <property type="match status" value="1"/>
</dbReference>
<dbReference type="Gene3D" id="2.10.109.10">
    <property type="entry name" value="Umud Fragment, subunit A"/>
    <property type="match status" value="1"/>
</dbReference>
<dbReference type="Gene3D" id="1.10.10.10">
    <property type="entry name" value="Winged helix-like DNA-binding domain superfamily/Winged helix DNA-binding domain"/>
    <property type="match status" value="1"/>
</dbReference>
<dbReference type="HAMAP" id="MF_00015">
    <property type="entry name" value="LexA"/>
    <property type="match status" value="1"/>
</dbReference>
<dbReference type="InterPro" id="IPR006200">
    <property type="entry name" value="LexA"/>
</dbReference>
<dbReference type="InterPro" id="IPR039418">
    <property type="entry name" value="LexA-like"/>
</dbReference>
<dbReference type="InterPro" id="IPR036286">
    <property type="entry name" value="LexA/Signal_pep-like_sf"/>
</dbReference>
<dbReference type="InterPro" id="IPR006199">
    <property type="entry name" value="LexA_DNA-bd_dom"/>
</dbReference>
<dbReference type="InterPro" id="IPR050077">
    <property type="entry name" value="LexA_repressor"/>
</dbReference>
<dbReference type="InterPro" id="IPR006197">
    <property type="entry name" value="Peptidase_S24_LexA"/>
</dbReference>
<dbReference type="InterPro" id="IPR015927">
    <property type="entry name" value="Peptidase_S24_S26A/B/C"/>
</dbReference>
<dbReference type="InterPro" id="IPR036388">
    <property type="entry name" value="WH-like_DNA-bd_sf"/>
</dbReference>
<dbReference type="InterPro" id="IPR036390">
    <property type="entry name" value="WH_DNA-bd_sf"/>
</dbReference>
<dbReference type="NCBIfam" id="TIGR00498">
    <property type="entry name" value="lexA"/>
    <property type="match status" value="1"/>
</dbReference>
<dbReference type="PANTHER" id="PTHR33516">
    <property type="entry name" value="LEXA REPRESSOR"/>
    <property type="match status" value="1"/>
</dbReference>
<dbReference type="PANTHER" id="PTHR33516:SF2">
    <property type="entry name" value="LEXA REPRESSOR-RELATED"/>
    <property type="match status" value="1"/>
</dbReference>
<dbReference type="Pfam" id="PF01726">
    <property type="entry name" value="LexA_DNA_bind"/>
    <property type="match status" value="1"/>
</dbReference>
<dbReference type="Pfam" id="PF00717">
    <property type="entry name" value="Peptidase_S24"/>
    <property type="match status" value="1"/>
</dbReference>
<dbReference type="PRINTS" id="PR00726">
    <property type="entry name" value="LEXASERPTASE"/>
</dbReference>
<dbReference type="SUPFAM" id="SSF51306">
    <property type="entry name" value="LexA/Signal peptidase"/>
    <property type="match status" value="1"/>
</dbReference>
<dbReference type="SUPFAM" id="SSF46785">
    <property type="entry name" value="Winged helix' DNA-binding domain"/>
    <property type="match status" value="1"/>
</dbReference>
<organism>
    <name type="scientific">Thermotoga neapolitana</name>
    <dbReference type="NCBI Taxonomy" id="2337"/>
    <lineage>
        <taxon>Bacteria</taxon>
        <taxon>Thermotogati</taxon>
        <taxon>Thermotogota</taxon>
        <taxon>Thermotogae</taxon>
        <taxon>Thermotogales</taxon>
        <taxon>Thermotogaceae</taxon>
        <taxon>Thermotoga</taxon>
    </lineage>
</organism>
<evidence type="ECO:0000255" key="1">
    <source>
        <dbReference type="HAMAP-Rule" id="MF_00015"/>
    </source>
</evidence>
<keyword id="KW-0068">Autocatalytic cleavage</keyword>
<keyword id="KW-0227">DNA damage</keyword>
<keyword id="KW-0234">DNA repair</keyword>
<keyword id="KW-0235">DNA replication</keyword>
<keyword id="KW-0238">DNA-binding</keyword>
<keyword id="KW-0378">Hydrolase</keyword>
<keyword id="KW-0678">Repressor</keyword>
<keyword id="KW-0742">SOS response</keyword>
<keyword id="KW-0804">Transcription</keyword>
<keyword id="KW-0805">Transcription regulation</keyword>
<accession>O86948</accession>